<feature type="chain" id="PRO_0000094081" description="Protein HflK">
    <location>
        <begin position="1"/>
        <end position="311"/>
    </location>
</feature>
<feature type="transmembrane region" description="Helical" evidence="2">
    <location>
        <begin position="15"/>
        <end position="35"/>
    </location>
</feature>
<keyword id="KW-0472">Membrane</keyword>
<keyword id="KW-1185">Reference proteome</keyword>
<keyword id="KW-0812">Transmembrane</keyword>
<keyword id="KW-1133">Transmembrane helix</keyword>
<name>HFLK_BORBU</name>
<gene>
    <name type="primary">hflK</name>
    <name type="ordered locus">BB_0203</name>
</gene>
<organism>
    <name type="scientific">Borreliella burgdorferi (strain ATCC 35210 / DSM 4680 / CIP 102532 / B31)</name>
    <name type="common">Borrelia burgdorferi</name>
    <dbReference type="NCBI Taxonomy" id="224326"/>
    <lineage>
        <taxon>Bacteria</taxon>
        <taxon>Pseudomonadati</taxon>
        <taxon>Spirochaetota</taxon>
        <taxon>Spirochaetia</taxon>
        <taxon>Spirochaetales</taxon>
        <taxon>Borreliaceae</taxon>
        <taxon>Borreliella</taxon>
    </lineage>
</organism>
<reference key="1">
    <citation type="journal article" date="1997" name="Nature">
        <title>Genomic sequence of a Lyme disease spirochaete, Borrelia burgdorferi.</title>
        <authorList>
            <person name="Fraser C.M."/>
            <person name="Casjens S."/>
            <person name="Huang W.M."/>
            <person name="Sutton G.G."/>
            <person name="Clayton R.A."/>
            <person name="Lathigra R."/>
            <person name="White O."/>
            <person name="Ketchum K.A."/>
            <person name="Dodson R.J."/>
            <person name="Hickey E.K."/>
            <person name="Gwinn M.L."/>
            <person name="Dougherty B.A."/>
            <person name="Tomb J.-F."/>
            <person name="Fleischmann R.D."/>
            <person name="Richardson D.L."/>
            <person name="Peterson J.D."/>
            <person name="Kerlavage A.R."/>
            <person name="Quackenbush J."/>
            <person name="Salzberg S.L."/>
            <person name="Hanson M."/>
            <person name="van Vugt R."/>
            <person name="Palmer N."/>
            <person name="Adams M.D."/>
            <person name="Gocayne J.D."/>
            <person name="Weidman J.F."/>
            <person name="Utterback T.R."/>
            <person name="Watthey L."/>
            <person name="McDonald L.A."/>
            <person name="Artiach P."/>
            <person name="Bowman C."/>
            <person name="Garland S.A."/>
            <person name="Fujii C."/>
            <person name="Cotton M.D."/>
            <person name="Horst K."/>
            <person name="Roberts K.M."/>
            <person name="Hatch B."/>
            <person name="Smith H.O."/>
            <person name="Venter J.C."/>
        </authorList>
    </citation>
    <scope>NUCLEOTIDE SEQUENCE [LARGE SCALE GENOMIC DNA]</scope>
    <source>
        <strain>ATCC 35210 / DSM 4680 / CIP 102532 / B31</strain>
    </source>
</reference>
<accession>O51221</accession>
<sequence length="311" mass="35825">MFDIKQIFNKTYEYLIIIITLILISIIVIANIFIVGPSEEAIVLRLGKLNRTLDSGIHVKIPLIEEKFIVPVKIVQEIKFGFLISPSDIRENDNANDESRIITGDLNIINIEWLVQYKIRDPYSFKFKVEDPETTIKDIAKSSMNRLIGDNTIFEIINDNRVGITEGVKSSMNEIIDNYNLGIDVVQVQIRNALPPKGKVYEAFEDVNIAIQDKNKYINEGRKEFNQIVPKIKGEALKVIEEARGYKESRINNALADTEIFNAILDAYLKNPDITKERLYNETMKEILENKDNIELIDKNFKNFLPFKEVK</sequence>
<evidence type="ECO:0000250" key="1"/>
<evidence type="ECO:0000255" key="2"/>
<evidence type="ECO:0000305" key="3"/>
<protein>
    <recommendedName>
        <fullName>Protein HflK</fullName>
    </recommendedName>
</protein>
<dbReference type="EMBL" id="AE000783">
    <property type="protein sequence ID" value="AAC66586.1"/>
    <property type="molecule type" value="Genomic_DNA"/>
</dbReference>
<dbReference type="PIR" id="C70125">
    <property type="entry name" value="C70125"/>
</dbReference>
<dbReference type="RefSeq" id="NP_212337.1">
    <property type="nucleotide sequence ID" value="NC_001318.1"/>
</dbReference>
<dbReference type="RefSeq" id="WP_002556800.1">
    <property type="nucleotide sequence ID" value="NC_001318.1"/>
</dbReference>
<dbReference type="SMR" id="O51221"/>
<dbReference type="STRING" id="224326.BB_0203"/>
<dbReference type="PaxDb" id="224326-BB_0203"/>
<dbReference type="EnsemblBacteria" id="AAC66586">
    <property type="protein sequence ID" value="AAC66586"/>
    <property type="gene ID" value="BB_0203"/>
</dbReference>
<dbReference type="KEGG" id="bbu:BB_0203"/>
<dbReference type="PATRIC" id="fig|224326.49.peg.600"/>
<dbReference type="HOGENOM" id="CLU_039173_0_1_12"/>
<dbReference type="OrthoDB" id="9779595at2"/>
<dbReference type="Proteomes" id="UP000001807">
    <property type="component" value="Chromosome"/>
</dbReference>
<dbReference type="GO" id="GO:0016020">
    <property type="term" value="C:membrane"/>
    <property type="evidence" value="ECO:0007669"/>
    <property type="project" value="UniProtKB-SubCell"/>
</dbReference>
<dbReference type="CDD" id="cd03404">
    <property type="entry name" value="SPFH_HflK"/>
    <property type="match status" value="1"/>
</dbReference>
<dbReference type="Gene3D" id="3.30.479.30">
    <property type="entry name" value="Band 7 domain"/>
    <property type="match status" value="1"/>
</dbReference>
<dbReference type="InterPro" id="IPR050710">
    <property type="entry name" value="Band7/mec-2_domain"/>
</dbReference>
<dbReference type="InterPro" id="IPR001107">
    <property type="entry name" value="Band_7"/>
</dbReference>
<dbReference type="InterPro" id="IPR036013">
    <property type="entry name" value="Band_7/SPFH_dom_sf"/>
</dbReference>
<dbReference type="InterPro" id="IPR010201">
    <property type="entry name" value="HflK"/>
</dbReference>
<dbReference type="NCBIfam" id="TIGR01933">
    <property type="entry name" value="hflK"/>
    <property type="match status" value="1"/>
</dbReference>
<dbReference type="PANTHER" id="PTHR43327:SF2">
    <property type="entry name" value="MODULATOR OF FTSH PROTEASE HFLK"/>
    <property type="match status" value="1"/>
</dbReference>
<dbReference type="PANTHER" id="PTHR43327">
    <property type="entry name" value="STOMATIN-LIKE PROTEIN 2, MITOCHONDRIAL"/>
    <property type="match status" value="1"/>
</dbReference>
<dbReference type="Pfam" id="PF01145">
    <property type="entry name" value="Band_7"/>
    <property type="match status" value="1"/>
</dbReference>
<dbReference type="SMART" id="SM00244">
    <property type="entry name" value="PHB"/>
    <property type="match status" value="1"/>
</dbReference>
<dbReference type="SUPFAM" id="SSF117892">
    <property type="entry name" value="Band 7/SPFH domain"/>
    <property type="match status" value="1"/>
</dbReference>
<proteinExistence type="inferred from homology"/>
<comment type="function">
    <text evidence="1">HflC and HflK could encode or regulate a protease.</text>
</comment>
<comment type="subunit">
    <text evidence="1">HflC and HflK may interact to form a multimeric complex.</text>
</comment>
<comment type="subcellular location">
    <subcellularLocation>
        <location evidence="3">Membrane</location>
        <topology evidence="3">Single-pass membrane protein</topology>
    </subcellularLocation>
</comment>
<comment type="similarity">
    <text evidence="3">Belongs to the band 7/mec-2 family. HflK subfamily.</text>
</comment>